<dbReference type="EMBL" id="CP000769">
    <property type="protein sequence ID" value="ABS25650.1"/>
    <property type="molecule type" value="Genomic_DNA"/>
</dbReference>
<dbReference type="RefSeq" id="WP_011985756.1">
    <property type="nucleotide sequence ID" value="NC_009675.1"/>
</dbReference>
<dbReference type="SMR" id="A7HAA4"/>
<dbReference type="STRING" id="404589.Anae109_1443"/>
<dbReference type="KEGG" id="afw:Anae109_1443"/>
<dbReference type="eggNOG" id="COG2924">
    <property type="taxonomic scope" value="Bacteria"/>
</dbReference>
<dbReference type="HOGENOM" id="CLU_170994_0_0_7"/>
<dbReference type="OrthoDB" id="9804318at2"/>
<dbReference type="Proteomes" id="UP000006382">
    <property type="component" value="Chromosome"/>
</dbReference>
<dbReference type="GO" id="GO:0005829">
    <property type="term" value="C:cytosol"/>
    <property type="evidence" value="ECO:0007669"/>
    <property type="project" value="TreeGrafter"/>
</dbReference>
<dbReference type="GO" id="GO:0005506">
    <property type="term" value="F:iron ion binding"/>
    <property type="evidence" value="ECO:0007669"/>
    <property type="project" value="UniProtKB-UniRule"/>
</dbReference>
<dbReference type="GO" id="GO:0034599">
    <property type="term" value="P:cellular response to oxidative stress"/>
    <property type="evidence" value="ECO:0007669"/>
    <property type="project" value="TreeGrafter"/>
</dbReference>
<dbReference type="Gene3D" id="1.10.3880.10">
    <property type="entry name" value="Fe(II) trafficking protein YggX"/>
    <property type="match status" value="1"/>
</dbReference>
<dbReference type="HAMAP" id="MF_00686">
    <property type="entry name" value="Fe_traffic_YggX"/>
    <property type="match status" value="1"/>
</dbReference>
<dbReference type="InterPro" id="IPR007457">
    <property type="entry name" value="Fe_traffick_prot_YggX"/>
</dbReference>
<dbReference type="InterPro" id="IPR036766">
    <property type="entry name" value="Fe_traffick_prot_YggX_sf"/>
</dbReference>
<dbReference type="NCBIfam" id="NF003817">
    <property type="entry name" value="PRK05408.1"/>
    <property type="match status" value="1"/>
</dbReference>
<dbReference type="PANTHER" id="PTHR36965">
    <property type="entry name" value="FE(2+)-TRAFFICKING PROTEIN-RELATED"/>
    <property type="match status" value="1"/>
</dbReference>
<dbReference type="PANTHER" id="PTHR36965:SF1">
    <property type="entry name" value="FE(2+)-TRAFFICKING PROTEIN-RELATED"/>
    <property type="match status" value="1"/>
</dbReference>
<dbReference type="Pfam" id="PF04362">
    <property type="entry name" value="Iron_traffic"/>
    <property type="match status" value="1"/>
</dbReference>
<dbReference type="PIRSF" id="PIRSF029827">
    <property type="entry name" value="Fe_traffic_YggX"/>
    <property type="match status" value="1"/>
</dbReference>
<dbReference type="SUPFAM" id="SSF111148">
    <property type="entry name" value="YggX-like"/>
    <property type="match status" value="1"/>
</dbReference>
<proteinExistence type="inferred from homology"/>
<gene>
    <name type="ordered locus">Anae109_1443</name>
</gene>
<sequence length="92" mass="10841">MARMVMCKKLGKELPGLTFKPFPNELGQRIYDSVSQDAWKLWLEHFKMIMNEYRLSPADPRSQEILYQQAEQFFFSEGAQLPPDYRPPRSKG</sequence>
<protein>
    <recommendedName>
        <fullName evidence="1">Probable Fe(2+)-trafficking protein</fullName>
    </recommendedName>
</protein>
<name>FETP_ANADF</name>
<organism>
    <name type="scientific">Anaeromyxobacter sp. (strain Fw109-5)</name>
    <dbReference type="NCBI Taxonomy" id="404589"/>
    <lineage>
        <taxon>Bacteria</taxon>
        <taxon>Pseudomonadati</taxon>
        <taxon>Myxococcota</taxon>
        <taxon>Myxococcia</taxon>
        <taxon>Myxococcales</taxon>
        <taxon>Cystobacterineae</taxon>
        <taxon>Anaeromyxobacteraceae</taxon>
        <taxon>Anaeromyxobacter</taxon>
    </lineage>
</organism>
<reference key="1">
    <citation type="journal article" date="2015" name="Genome Announc.">
        <title>Complete genome sequence of Anaeromyxobacter sp. Fw109-5, an anaerobic, metal-reducing bacterium isolated from a contaminated subsurface environment.</title>
        <authorList>
            <person name="Hwang C."/>
            <person name="Copeland A."/>
            <person name="Lucas S."/>
            <person name="Lapidus A."/>
            <person name="Barry K."/>
            <person name="Glavina Del Rio T."/>
            <person name="Dalin E."/>
            <person name="Tice H."/>
            <person name="Pitluck S."/>
            <person name="Sims D."/>
            <person name="Brettin T."/>
            <person name="Bruce D.C."/>
            <person name="Detter J.C."/>
            <person name="Han C.S."/>
            <person name="Schmutz J."/>
            <person name="Larimer F.W."/>
            <person name="Land M.L."/>
            <person name="Hauser L.J."/>
            <person name="Kyrpides N."/>
            <person name="Lykidis A."/>
            <person name="Richardson P."/>
            <person name="Belieav A."/>
            <person name="Sanford R.A."/>
            <person name="Loeffler F.E."/>
            <person name="Fields M.W."/>
        </authorList>
    </citation>
    <scope>NUCLEOTIDE SEQUENCE [LARGE SCALE GENOMIC DNA]</scope>
    <source>
        <strain>Fw109-5</strain>
    </source>
</reference>
<keyword id="KW-0408">Iron</keyword>
<keyword id="KW-1185">Reference proteome</keyword>
<feature type="chain" id="PRO_1000045016" description="Probable Fe(2+)-trafficking protein">
    <location>
        <begin position="1"/>
        <end position="92"/>
    </location>
</feature>
<evidence type="ECO:0000255" key="1">
    <source>
        <dbReference type="HAMAP-Rule" id="MF_00686"/>
    </source>
</evidence>
<accession>A7HAA4</accession>
<comment type="function">
    <text evidence="1">Could be a mediator in iron transactions between iron acquisition and iron-requiring processes, such as synthesis and/or repair of Fe-S clusters in biosynthetic enzymes.</text>
</comment>
<comment type="similarity">
    <text evidence="1">Belongs to the Fe(2+)-trafficking protein family.</text>
</comment>